<keyword id="KW-0175">Coiled coil</keyword>
<keyword id="KW-1015">Disulfide bond</keyword>
<keyword id="KW-1170">Fusion of virus membrane with host endosomal membrane</keyword>
<keyword id="KW-1168">Fusion of virus membrane with host membrane</keyword>
<keyword id="KW-0325">Glycoprotein</keyword>
<keyword id="KW-1032">Host cell membrane</keyword>
<keyword id="KW-1043">Host membrane</keyword>
<keyword id="KW-0945">Host-virus interaction</keyword>
<keyword id="KW-0449">Lipoprotein</keyword>
<keyword id="KW-0472">Membrane</keyword>
<keyword id="KW-0564">Palmitate</keyword>
<keyword id="KW-0732">Signal</keyword>
<keyword id="KW-0812">Transmembrane</keyword>
<keyword id="KW-1133">Transmembrane helix</keyword>
<keyword id="KW-1161">Viral attachment to host cell</keyword>
<keyword id="KW-0261">Viral envelope protein</keyword>
<keyword id="KW-1162">Viral penetration into host cytoplasm</keyword>
<keyword id="KW-0946">Virion</keyword>
<keyword id="KW-0843">Virulence</keyword>
<keyword id="KW-1160">Virus entry into host cell</keyword>
<name>SPIKE_CVBOK</name>
<evidence type="ECO:0000250" key="1"/>
<evidence type="ECO:0000255" key="2">
    <source>
        <dbReference type="HAMAP-Rule" id="MF_04099"/>
    </source>
</evidence>
<evidence type="ECO:0000255" key="3">
    <source>
        <dbReference type="PROSITE-ProRule" id="PRU01269"/>
    </source>
</evidence>
<evidence type="ECO:0000255" key="4">
    <source>
        <dbReference type="PROSITE-ProRule" id="PRU01270"/>
    </source>
</evidence>
<reference key="1">
    <citation type="journal article" date="1998" name="Virus Genes">
        <title>Nucleotide and predicted amino acid sequences of all genes encoded by the 3' genomic portion (9.5 kb) of respiratory bovine coronaviruses and comparisons among respiratory and enteric coronaviruses.</title>
        <authorList>
            <person name="Chouljenko V.N."/>
            <person name="Kousoulas K.G."/>
            <person name="Lin X.Q."/>
            <person name="Storz J."/>
        </authorList>
    </citation>
    <scope>NUCLEOTIDE SEQUENCE [GENOMIC RNA]</scope>
    <source>
        <strain>Isolate OK-0514-3</strain>
    </source>
</reference>
<gene>
    <name evidence="2" type="primary">S</name>
    <name type="ORF">3</name>
</gene>
<feature type="signal peptide" evidence="2">
    <location>
        <begin position="1"/>
        <end position="13"/>
    </location>
</feature>
<feature type="chain" id="PRO_0000283916" description="Spike glycoprotein">
    <location>
        <begin position="14"/>
        <end position="1363"/>
    </location>
</feature>
<feature type="chain" id="PRO_0000283917" description="Spike protein S1">
    <location>
        <begin position="14"/>
        <end position="768"/>
    </location>
</feature>
<feature type="chain" id="PRO_0000283918" description="Spike protein S2">
    <location>
        <begin position="769"/>
        <end position="1363"/>
    </location>
</feature>
<feature type="chain" id="PRO_0000444075" description="Spike protein S2'" evidence="2">
    <location>
        <begin position="914"/>
        <end position="1363"/>
    </location>
</feature>
<feature type="topological domain" description="Extracellular" evidence="2">
    <location>
        <begin position="14"/>
        <end position="1307"/>
    </location>
</feature>
<feature type="transmembrane region" description="Helical" evidence="2">
    <location>
        <begin position="1308"/>
        <end position="1328"/>
    </location>
</feature>
<feature type="topological domain" description="Cytoplasmic" evidence="2">
    <location>
        <begin position="1329"/>
        <end position="1363"/>
    </location>
</feature>
<feature type="domain" description="BetaCoV S1-NTD" evidence="4">
    <location>
        <begin position="15"/>
        <end position="298"/>
    </location>
</feature>
<feature type="domain" description="BetaCoV S1-CTD" evidence="3">
    <location>
        <begin position="329"/>
        <end position="617"/>
    </location>
</feature>
<feature type="region of interest" description="Fusion peptide 1" evidence="2">
    <location>
        <begin position="914"/>
        <end position="935"/>
    </location>
</feature>
<feature type="region of interest" description="Fusion peptide 2" evidence="2">
    <location>
        <begin position="933"/>
        <end position="953"/>
    </location>
</feature>
<feature type="region of interest" description="Heptad repeat 1" evidence="2">
    <location>
        <begin position="1014"/>
        <end position="1064"/>
    </location>
</feature>
<feature type="region of interest" description="Heptad repeat 2" evidence="2">
    <location>
        <begin position="1258"/>
        <end position="1296"/>
    </location>
</feature>
<feature type="coiled-coil region" evidence="2">
    <location>
        <begin position="1043"/>
        <end position="1087"/>
    </location>
</feature>
<feature type="coiled-coil region" evidence="2">
    <location>
        <begin position="1269"/>
        <end position="1297"/>
    </location>
</feature>
<feature type="short sequence motif" description="KxHxx" evidence="2">
    <location>
        <begin position="1359"/>
        <end position="1363"/>
    </location>
</feature>
<feature type="site" description="Cleavage; by host" evidence="1">
    <location>
        <begin position="768"/>
        <end position="769"/>
    </location>
</feature>
<feature type="site" description="Cleavage" evidence="2">
    <location>
        <begin position="913"/>
        <end position="914"/>
    </location>
</feature>
<feature type="glycosylation site" description="N-linked (GlcNAc...) asparagine; by host" evidence="2">
    <location>
        <position position="59"/>
    </location>
</feature>
<feature type="glycosylation site" description="N-linked (GlcNAc...) asparagine; by host" evidence="2">
    <location>
        <position position="133"/>
    </location>
</feature>
<feature type="glycosylation site" description="N-linked (GlcNAc...) asparagine; by host" evidence="2">
    <location>
        <position position="198"/>
    </location>
</feature>
<feature type="glycosylation site" description="N-linked (GlcNAc...) asparagine; by host" evidence="2">
    <location>
        <position position="359"/>
    </location>
</feature>
<feature type="glycosylation site" description="N-linked (GlcNAc...) asparagine; by host" evidence="2">
    <location>
        <position position="437"/>
    </location>
</feature>
<feature type="glycosylation site" description="N-linked (GlcNAc...) asparagine; by host" evidence="2">
    <location>
        <position position="649"/>
    </location>
</feature>
<feature type="glycosylation site" description="N-linked (GlcNAc...) asparagine; by host" evidence="2">
    <location>
        <position position="676"/>
    </location>
</feature>
<feature type="glycosylation site" description="N-linked (GlcNAc...) asparagine; by host" evidence="2">
    <location>
        <position position="696"/>
    </location>
</feature>
<feature type="glycosylation site" description="N-linked (GlcNAc...) asparagine; by host" evidence="2">
    <location>
        <position position="714"/>
    </location>
</feature>
<feature type="glycosylation site" description="N-linked (GlcNAc...) asparagine; by host" evidence="2">
    <location>
        <position position="739"/>
    </location>
</feature>
<feature type="glycosylation site" description="N-linked (GlcNAc...) asparagine; by host" evidence="2">
    <location>
        <position position="788"/>
    </location>
</feature>
<feature type="glycosylation site" description="N-linked (GlcNAc...) asparagine; by host" evidence="2">
    <location>
        <position position="937"/>
    </location>
</feature>
<feature type="glycosylation site" description="N-linked (GlcNAc...) asparagine; by host" evidence="2">
    <location>
        <position position="1194"/>
    </location>
</feature>
<feature type="glycosylation site" description="N-linked (GlcNAc...) asparagine; by host" evidence="2">
    <location>
        <position position="1224"/>
    </location>
</feature>
<feature type="glycosylation site" description="N-linked (GlcNAc...) asparagine; by host" evidence="2">
    <location>
        <position position="1234"/>
    </location>
</feature>
<feature type="glycosylation site" description="N-linked (GlcNAc...) asparagine; by host" evidence="2">
    <location>
        <position position="1253"/>
    </location>
</feature>
<feature type="glycosylation site" description="N-linked (GlcNAc...) asparagine; by host" evidence="2">
    <location>
        <position position="1267"/>
    </location>
</feature>
<feature type="glycosylation site" description="N-linked (GlcNAc...) asparagine; by host" evidence="2">
    <location>
        <position position="1288"/>
    </location>
</feature>
<feature type="disulfide bond" evidence="4">
    <location>
        <begin position="21"/>
        <end position="165"/>
    </location>
</feature>
<feature type="disulfide bond" evidence="4">
    <location>
        <begin position="160"/>
        <end position="193"/>
    </location>
</feature>
<feature type="disulfide bond" evidence="4">
    <location>
        <begin position="172"/>
        <end position="252"/>
    </location>
</feature>
<feature type="disulfide bond" evidence="4">
    <location>
        <begin position="286"/>
        <end position="296"/>
    </location>
</feature>
<feature type="disulfide bond" evidence="3">
    <location>
        <begin position="331"/>
        <end position="356"/>
    </location>
</feature>
<feature type="disulfide bond" evidence="3">
    <location>
        <begin position="374"/>
        <end position="427"/>
    </location>
</feature>
<feature type="disulfide bond" evidence="3">
    <location>
        <begin position="386"/>
        <end position="615"/>
    </location>
</feature>
<feature type="disulfide bond" evidence="2">
    <location>
        <begin position="938"/>
        <end position="949"/>
    </location>
</feature>
<protein>
    <recommendedName>
        <fullName evidence="2">Spike glycoprotein</fullName>
        <shortName evidence="2">S glycoprotein</shortName>
    </recommendedName>
    <alternativeName>
        <fullName evidence="2">E2</fullName>
    </alternativeName>
    <alternativeName>
        <fullName evidence="2">Peplomer protein</fullName>
    </alternativeName>
    <component>
        <recommendedName>
            <fullName evidence="2">Spike protein S1</fullName>
        </recommendedName>
    </component>
    <component>
        <recommendedName>
            <fullName evidence="2">Spike protein S2</fullName>
        </recommendedName>
    </component>
    <component>
        <recommendedName>
            <fullName evidence="2">Spike protein S2'</fullName>
        </recommendedName>
    </component>
</protein>
<comment type="function">
    <molecule>Spike protein S1</molecule>
    <text evidence="2">Attaches the virion to the cell membrane by interacting with host receptor, initiating the infection.</text>
</comment>
<comment type="function">
    <molecule>Spike protein S2</molecule>
    <text evidence="2">Mediates fusion of the virion and cellular membranes by acting as a class I viral fusion protein. Under the current model, the protein has at least three conformational states: pre-fusion native state, pre-hairpin intermediate state, and post-fusion hairpin state. During viral and target cell membrane fusion, the coiled coil regions (heptad repeats) assume a trimer-of-hairpins structure, positioning the fusion peptide in close proximity to the C-terminal region of the ectodomain. The formation of this structure appears to drive apposition and subsequent fusion of viral and target cell membranes.</text>
</comment>
<comment type="function">
    <molecule>Spike protein S2'</molecule>
    <text evidence="2">Acts as a viral fusion peptide which is unmasked following S2 cleavage occurring upon virus endocytosis.</text>
</comment>
<comment type="subunit">
    <text evidence="2">Homotrimer; each monomer consists of a S1 and a S2 subunit. The resulting peplomers protrude from the virus surface as spikes.</text>
</comment>
<comment type="subcellular location">
    <subcellularLocation>
        <location evidence="2">Virion membrane</location>
        <topology evidence="2">Single-pass type I membrane protein</topology>
    </subcellularLocation>
    <subcellularLocation>
        <location evidence="2">Host endoplasmic reticulum-Golgi intermediate compartment membrane</location>
        <topology evidence="2">Single-pass type I membrane protein</topology>
    </subcellularLocation>
    <subcellularLocation>
        <location evidence="2">Host cell membrane</location>
        <topology evidence="2">Single-pass type I membrane protein</topology>
    </subcellularLocation>
    <text evidence="2">Accumulates in the endoplasmic reticulum-Golgi intermediate compartment, where it participates in virus particle assembly. Some S oligomers are transported to the host plasma membrane, where they may mediate cell-cell fusion.</text>
</comment>
<comment type="domain">
    <text evidence="2">Fusion peptide 1 (FP1) and fusion peptide 2 (FP2) function cooperatively and have a membrane-ordering effect on lipid headgroups and shallow hydrophobic regions of target bilayers. They are considered as two domains of an extended, bipartite FP. The membrane-ordering activity is calcium-dependent and also dependent on correct folding, which is maintained by an internal disulfide bond in FP2.</text>
</comment>
<comment type="PTM">
    <text evidence="2">Specific enzymatic cleavages in vivo yield mature proteins. The precursor is processed into S1 and S2 by host cell furin or another cellular protease to yield the mature S1 and S2 proteins. Additionally, a second cleavage leads to the release of a fusion peptide after viral attachment to host cell receptor.</text>
</comment>
<comment type="PTM">
    <text evidence="2">The cytoplasmic Cys-rich domain is palmitoylated. Spike glycoprotein is digested within host endosomes.</text>
</comment>
<comment type="similarity">
    <text evidence="2">Belongs to the betacoronaviruses spike protein family.</text>
</comment>
<proteinExistence type="inferred from homology"/>
<organismHost>
    <name type="scientific">Bos taurus</name>
    <name type="common">Bovine</name>
    <dbReference type="NCBI Taxonomy" id="9913"/>
</organismHost>
<accession>Q9QAQ8</accession>
<dbReference type="EMBL" id="AF058944">
    <property type="protein sequence ID" value="AAF25519.1"/>
    <property type="molecule type" value="Genomic_RNA"/>
</dbReference>
<dbReference type="SMR" id="Q9QAQ8"/>
<dbReference type="GlyCosmos" id="Q9QAQ8">
    <property type="glycosylation" value="18 sites, No reported glycans"/>
</dbReference>
<dbReference type="GO" id="GO:0044173">
    <property type="term" value="C:host cell endoplasmic reticulum-Golgi intermediate compartment membrane"/>
    <property type="evidence" value="ECO:0007669"/>
    <property type="project" value="UniProtKB-SubCell"/>
</dbReference>
<dbReference type="GO" id="GO:0020002">
    <property type="term" value="C:host cell plasma membrane"/>
    <property type="evidence" value="ECO:0007669"/>
    <property type="project" value="UniProtKB-SubCell"/>
</dbReference>
<dbReference type="GO" id="GO:0016020">
    <property type="term" value="C:membrane"/>
    <property type="evidence" value="ECO:0007669"/>
    <property type="project" value="UniProtKB-UniRule"/>
</dbReference>
<dbReference type="GO" id="GO:0019031">
    <property type="term" value="C:viral envelope"/>
    <property type="evidence" value="ECO:0007669"/>
    <property type="project" value="UniProtKB-UniRule"/>
</dbReference>
<dbReference type="GO" id="GO:0055036">
    <property type="term" value="C:virion membrane"/>
    <property type="evidence" value="ECO:0007669"/>
    <property type="project" value="UniProtKB-SubCell"/>
</dbReference>
<dbReference type="GO" id="GO:0075509">
    <property type="term" value="P:endocytosis involved in viral entry into host cell"/>
    <property type="evidence" value="ECO:0007669"/>
    <property type="project" value="UniProtKB-UniRule"/>
</dbReference>
<dbReference type="GO" id="GO:0039654">
    <property type="term" value="P:fusion of virus membrane with host endosome membrane"/>
    <property type="evidence" value="ECO:0007669"/>
    <property type="project" value="UniProtKB-UniRule"/>
</dbReference>
<dbReference type="GO" id="GO:0019064">
    <property type="term" value="P:fusion of virus membrane with host plasma membrane"/>
    <property type="evidence" value="ECO:0007669"/>
    <property type="project" value="UniProtKB-UniRule"/>
</dbReference>
<dbReference type="GO" id="GO:0046813">
    <property type="term" value="P:receptor-mediated virion attachment to host cell"/>
    <property type="evidence" value="ECO:0007669"/>
    <property type="project" value="UniProtKB-UniRule"/>
</dbReference>
<dbReference type="CDD" id="cd21485">
    <property type="entry name" value="HCoV-OC43-like_Spike_S1_RBD"/>
    <property type="match status" value="1"/>
</dbReference>
<dbReference type="CDD" id="cd22380">
    <property type="entry name" value="HKU1-CoV-like_Spike_SD1-2_S1-S2_S2"/>
    <property type="match status" value="1"/>
</dbReference>
<dbReference type="CDD" id="cd21625">
    <property type="entry name" value="MHV-like_Spike_S1_NTD"/>
    <property type="match status" value="1"/>
</dbReference>
<dbReference type="FunFam" id="1.20.5.300:FF:000003">
    <property type="entry name" value="Spike glycoprotein"/>
    <property type="match status" value="1"/>
</dbReference>
<dbReference type="FunFam" id="1.20.5.300:FF:000006">
    <property type="entry name" value="Spike glycoprotein"/>
    <property type="match status" value="1"/>
</dbReference>
<dbReference type="FunFam" id="2.60.120.960:FF:000002">
    <property type="entry name" value="Spike glycoprotein"/>
    <property type="match status" value="1"/>
</dbReference>
<dbReference type="FunFam" id="3.30.70.1840:FF:000003">
    <property type="entry name" value="Spike glycoprotein"/>
    <property type="match status" value="1"/>
</dbReference>
<dbReference type="Gene3D" id="1.20.5.300">
    <property type="match status" value="2"/>
</dbReference>
<dbReference type="Gene3D" id="3.30.70.1840">
    <property type="match status" value="1"/>
</dbReference>
<dbReference type="Gene3D" id="2.60.120.960">
    <property type="entry name" value="Spike glycoprotein, N-terminal domain"/>
    <property type="match status" value="1"/>
</dbReference>
<dbReference type="HAMAP" id="MF_04099">
    <property type="entry name" value="BETA_CORONA_SPIKE"/>
    <property type="match status" value="1"/>
</dbReference>
<dbReference type="InterPro" id="IPR032500">
    <property type="entry name" value="bCoV_S1_N"/>
</dbReference>
<dbReference type="InterPro" id="IPR042578">
    <property type="entry name" value="BETA_CORONA_SPIKE"/>
</dbReference>
<dbReference type="InterPro" id="IPR043607">
    <property type="entry name" value="CoV_S1_C"/>
</dbReference>
<dbReference type="InterPro" id="IPR043473">
    <property type="entry name" value="S2_sf_CoV"/>
</dbReference>
<dbReference type="InterPro" id="IPR043002">
    <property type="entry name" value="Spike_N_sf"/>
</dbReference>
<dbReference type="InterPro" id="IPR044339">
    <property type="entry name" value="Spike_S1_NTD_MHV-like"/>
</dbReference>
<dbReference type="InterPro" id="IPR018548">
    <property type="entry name" value="Spike_S1_RBD_bCoV"/>
</dbReference>
<dbReference type="InterPro" id="IPR044372">
    <property type="entry name" value="Spike_S1_RBD_HCoV-OC43-like"/>
</dbReference>
<dbReference type="InterPro" id="IPR036326">
    <property type="entry name" value="Spike_S1_RBD_sf_bCoV"/>
</dbReference>
<dbReference type="InterPro" id="IPR002552">
    <property type="entry name" value="Spike_S2_CoV"/>
</dbReference>
<dbReference type="InterPro" id="IPR043614">
    <property type="entry name" value="Spike_S2_CoV_C"/>
</dbReference>
<dbReference type="InterPro" id="IPR044873">
    <property type="entry name" value="Spike_S2_CoV_HR1"/>
</dbReference>
<dbReference type="InterPro" id="IPR044874">
    <property type="entry name" value="Spike_S2_CoV_HR2"/>
</dbReference>
<dbReference type="Pfam" id="PF16451">
    <property type="entry name" value="bCoV_S1_N"/>
    <property type="match status" value="1"/>
</dbReference>
<dbReference type="Pfam" id="PF09408">
    <property type="entry name" value="bCoV_S1_RBD"/>
    <property type="match status" value="1"/>
</dbReference>
<dbReference type="Pfam" id="PF19209">
    <property type="entry name" value="CoV_S1_C"/>
    <property type="match status" value="1"/>
</dbReference>
<dbReference type="Pfam" id="PF01601">
    <property type="entry name" value="CoV_S2"/>
    <property type="match status" value="1"/>
</dbReference>
<dbReference type="Pfam" id="PF19214">
    <property type="entry name" value="CoV_S2_C"/>
    <property type="match status" value="1"/>
</dbReference>
<dbReference type="SUPFAM" id="SSF111474">
    <property type="entry name" value="Coronavirus S2 glycoprotein"/>
    <property type="match status" value="2"/>
</dbReference>
<dbReference type="SUPFAM" id="SSF143587">
    <property type="entry name" value="SARS receptor-binding domain-like"/>
    <property type="match status" value="1"/>
</dbReference>
<dbReference type="PROSITE" id="PS51921">
    <property type="entry name" value="BCOV_S1_CTD"/>
    <property type="match status" value="1"/>
</dbReference>
<dbReference type="PROSITE" id="PS51922">
    <property type="entry name" value="BCOV_S1_NTD"/>
    <property type="match status" value="1"/>
</dbReference>
<dbReference type="PROSITE" id="PS51923">
    <property type="entry name" value="COV_S2_HR1"/>
    <property type="match status" value="1"/>
</dbReference>
<dbReference type="PROSITE" id="PS51924">
    <property type="entry name" value="COV_S2_HR2"/>
    <property type="match status" value="1"/>
</dbReference>
<sequence length="1363" mass="150539">MFLILLISLPTAFAVIGDLKCTTVSINDVDTGVPSISTDTVDVTNGLGTYYVLDRVYLNTTLLLNGYYPTSGSTYRNMALKGTLLLSTLWFKPPFLSDFTNGIFAKVKNTKVIKDGVKYSEFPAITIGSTFVNTSYSVVVQPHTTNLDNKLQGLLEISVCQYTMCEYPNTICNPNLGNQRVELWHWDTGVVSCLYKRNFTYDVNADYLYFHFYQEGGTFYAYFTDTGVVTKFLFNVYLGTVLSHYYVMPLTCNSAMTLEYWVTPLTSKQYLLAFNQDGVIFNAVDCKSDFMSEIKCKTLSIAPSTGVYELNGYTVQPIADVYRRIPNLPDCNIEAWLNDKSVPSPLNWERKTFSNCNFNMSSLMSFIQADSFTCNNIDAAKIYGMCFSSITIDKFAIPNGRKVDLQLGNLGYLQSFNYRIDTTATSCQLYYNLPAANVSVSRFNPSIWNRRFGFTEQSVFKPQPAGVFTDHDVVYAQHCFKAPTNFCPCKLDGSLCVGSGSGIDAGYKNTGIGTCPAGTNYLTCHNAAQCGCLCTPDPITSKATGPYKCPQTKYLVGIGEHCSGLAIKSDYCGGNPCSCRPQAFLGWSVDSCLQGDRCNIFANFILHDVNSGTTCSTDLQKSNTDIILGVCVNYDLYGITGQGIFVEVNATYYNSWQNLLYDSNGNLYGFRDYLTNRTFMIRSCYSGRVSAAFHANSSEPALLFRNIKCNYVFNNTLSRQLQPINYFDSYLGCVVNADNSTSSVVQTCDLTVGSGYCVDYSTKRRSRRSITTGYRFTNFEPFTVNSVNDSLEPVGGLYEIQIPSEFTIGNMEEFIQTSSPKVTIDCSAFVCGDYAACKSQLVEYGSFCDNINAILTEVNELLDTTQLQVANSLMNGVTLSTKLKDGVNFNVDDINFSPVLGCLGSDCNKVSSRSAIEDLLFSKVKLSDVGFVEAYNNCTGGAEIRDLICVQSYNGIKVLPPLLSENQISGYTLAATSASLFPPWSAAAGVPFYLNVQYRINGIGVTMDVLSQNQKLIANAFNNALGAIQEGFDATNSALVKIQAVVNANAEALNNLLQQLSNRFGAISSSLQEILSRLDALEAQAQIDRLINGRLTALNAYVSQQLSDSTLVKFSAAQAMEKVNECVKSQSSRINFCGNGNHIISLVQNAPYGLYFIHFSYVPTKYVTAKVSPGLCIAGDRGIAPKSGYFVNVNNTWMFTGSGYYYPEPITGNNVVVMSTCAVNYTKAPDVMLNISTPNLPDFKEELDQWFKNQTSVAPDLSLDYINVTFLDLQDEMNRLQEAIKVLNQSYINLKDIGTYEYYVKWPWYVWLLIGFAGVAMLVLLFFICCCTGCGTSCFKKCGGCCDDYTGHQELVIKTSHDD</sequence>
<organism>
    <name type="scientific">Bovine coronavirus (strain OK-0514)</name>
    <name type="common">BCoV</name>
    <name type="synonym">BCV</name>
    <dbReference type="NCBI Taxonomy" id="231432"/>
    <lineage>
        <taxon>Viruses</taxon>
        <taxon>Riboviria</taxon>
        <taxon>Orthornavirae</taxon>
        <taxon>Pisuviricota</taxon>
        <taxon>Pisoniviricetes</taxon>
        <taxon>Nidovirales</taxon>
        <taxon>Cornidovirineae</taxon>
        <taxon>Coronaviridae</taxon>
        <taxon>Orthocoronavirinae</taxon>
        <taxon>Betacoronavirus</taxon>
        <taxon>Embecovirus</taxon>
        <taxon>Betacoronavirus 1</taxon>
    </lineage>
</organism>